<name>KR121_HUMAN</name>
<protein>
    <recommendedName>
        <fullName>Keratin-associated protein 12-1</fullName>
    </recommendedName>
    <alternativeName>
        <fullName>High sulfur keratin-associated protein 12.1</fullName>
    </alternativeName>
    <alternativeName>
        <fullName>Keratin-associated protein 12.1</fullName>
    </alternativeName>
</protein>
<keyword id="KW-0416">Keratin</keyword>
<keyword id="KW-1267">Proteomics identification</keyword>
<keyword id="KW-1185">Reference proteome</keyword>
<keyword id="KW-0677">Repeat</keyword>
<evidence type="ECO:0000269" key="1">
    <source>
    </source>
</evidence>
<evidence type="ECO:0000269" key="2">
    <source>
    </source>
</evidence>
<evidence type="ECO:0000305" key="3"/>
<feature type="chain" id="PRO_0000185196" description="Keratin-associated protein 12-1">
    <location>
        <begin position="1"/>
        <end position="96"/>
    </location>
</feature>
<feature type="repeat" description="1">
    <location>
        <begin position="10"/>
        <end position="14"/>
    </location>
</feature>
<feature type="repeat" description="2">
    <location>
        <begin position="15"/>
        <end position="19"/>
    </location>
</feature>
<feature type="repeat" description="3">
    <location>
        <begin position="24"/>
        <end position="28"/>
    </location>
</feature>
<feature type="repeat" description="4">
    <location>
        <begin position="30"/>
        <end position="34"/>
    </location>
</feature>
<feature type="repeat" description="5">
    <location>
        <begin position="35"/>
        <end position="39"/>
    </location>
</feature>
<feature type="repeat" description="6">
    <location>
        <begin position="45"/>
        <end position="49"/>
    </location>
</feature>
<feature type="repeat" description="7">
    <location>
        <begin position="50"/>
        <end position="54"/>
    </location>
</feature>
<feature type="repeat" description="8">
    <location>
        <begin position="55"/>
        <end position="59"/>
    </location>
</feature>
<feature type="repeat" description="9">
    <location>
        <begin position="60"/>
        <end position="64"/>
    </location>
</feature>
<feature type="repeat" description="10">
    <location>
        <begin position="70"/>
        <end position="74"/>
    </location>
</feature>
<feature type="repeat" description="11">
    <location>
        <begin position="75"/>
        <end position="79"/>
    </location>
</feature>
<feature type="repeat" description="12">
    <location>
        <begin position="80"/>
        <end position="84"/>
    </location>
</feature>
<feature type="repeat" description="13">
    <location>
        <begin position="85"/>
        <end position="89"/>
    </location>
</feature>
<feature type="repeat" description="14">
    <location>
        <begin position="90"/>
        <end position="94"/>
    </location>
</feature>
<feature type="region of interest" description="14 X 5 AA approximate repeats">
    <location>
        <begin position="10"/>
        <end position="94"/>
    </location>
</feature>
<dbReference type="EMBL" id="AB076363">
    <property type="protein sequence ID" value="BAD01550.1"/>
    <property type="molecule type" value="mRNA"/>
</dbReference>
<dbReference type="EMBL" id="AJ566388">
    <property type="protein sequence ID" value="CAD97468.1"/>
    <property type="molecule type" value="mRNA"/>
</dbReference>
<dbReference type="EMBL" id="AL773604">
    <property type="status" value="NOT_ANNOTATED_CDS"/>
    <property type="molecule type" value="Genomic_DNA"/>
</dbReference>
<dbReference type="EMBL" id="BC119713">
    <property type="protein sequence ID" value="AAI19714.1"/>
    <property type="molecule type" value="mRNA"/>
</dbReference>
<dbReference type="EMBL" id="BC120942">
    <property type="protein sequence ID" value="AAI20943.1"/>
    <property type="molecule type" value="mRNA"/>
</dbReference>
<dbReference type="EMBL" id="BC127648">
    <property type="protein sequence ID" value="AAI27649.1"/>
    <property type="molecule type" value="mRNA"/>
</dbReference>
<dbReference type="CCDS" id="CCDS42966.1"/>
<dbReference type="RefSeq" id="NP_859014.1">
    <property type="nucleotide sequence ID" value="NM_181686.2"/>
</dbReference>
<dbReference type="BioGRID" id="131687">
    <property type="interactions" value="63"/>
</dbReference>
<dbReference type="FunCoup" id="P59990">
    <property type="interactions" value="79"/>
</dbReference>
<dbReference type="IntAct" id="P59990">
    <property type="interactions" value="56"/>
</dbReference>
<dbReference type="BioMuta" id="KRTAP12-1"/>
<dbReference type="DMDM" id="38257913"/>
<dbReference type="MassIVE" id="P59990"/>
<dbReference type="PeptideAtlas" id="P59990"/>
<dbReference type="Antibodypedia" id="82347">
    <property type="antibodies" value="1 antibodies from 1 providers"/>
</dbReference>
<dbReference type="DNASU" id="353332"/>
<dbReference type="Ensembl" id="ENST00000391617.1">
    <property type="protein sequence ID" value="ENSP00000375475.1"/>
    <property type="gene ID" value="ENSG00000187175.5"/>
</dbReference>
<dbReference type="GeneID" id="353332"/>
<dbReference type="KEGG" id="hsa:353332"/>
<dbReference type="MANE-Select" id="ENST00000391617.1">
    <property type="protein sequence ID" value="ENSP00000375475.1"/>
    <property type="RefSeq nucleotide sequence ID" value="NM_181686.2"/>
    <property type="RefSeq protein sequence ID" value="NP_859014.1"/>
</dbReference>
<dbReference type="UCSC" id="uc002zfv.3">
    <property type="organism name" value="human"/>
</dbReference>
<dbReference type="AGR" id="HGNC:20529"/>
<dbReference type="CTD" id="353332"/>
<dbReference type="GeneCards" id="KRTAP12-1"/>
<dbReference type="HGNC" id="HGNC:20529">
    <property type="gene designation" value="KRTAP12-1"/>
</dbReference>
<dbReference type="HPA" id="ENSG00000187175">
    <property type="expression patterns" value="Tissue enriched (skin)"/>
</dbReference>
<dbReference type="neXtProt" id="NX_P59990"/>
<dbReference type="PharmGKB" id="PA134971238"/>
<dbReference type="VEuPathDB" id="HostDB:ENSG00000187175"/>
<dbReference type="eggNOG" id="KOG4726">
    <property type="taxonomic scope" value="Eukaryota"/>
</dbReference>
<dbReference type="GeneTree" id="ENSGT00940000163527"/>
<dbReference type="HOGENOM" id="CLU_138013_1_0_1"/>
<dbReference type="InParanoid" id="P59990"/>
<dbReference type="OMA" id="PVRCQSS"/>
<dbReference type="PAN-GO" id="P59990">
    <property type="GO annotations" value="0 GO annotations based on evolutionary models"/>
</dbReference>
<dbReference type="PhylomeDB" id="P59990"/>
<dbReference type="TreeFam" id="TF339135"/>
<dbReference type="PathwayCommons" id="P59990"/>
<dbReference type="Reactome" id="R-HSA-6805567">
    <property type="pathway name" value="Keratinization"/>
</dbReference>
<dbReference type="SignaLink" id="P59990"/>
<dbReference type="BioGRID-ORCS" id="353332">
    <property type="hits" value="5 hits in 1067 CRISPR screens"/>
</dbReference>
<dbReference type="GenomeRNAi" id="353332"/>
<dbReference type="Pharos" id="P59990">
    <property type="development level" value="Tdark"/>
</dbReference>
<dbReference type="PRO" id="PR:P59990"/>
<dbReference type="Proteomes" id="UP000005640">
    <property type="component" value="Chromosome 21"/>
</dbReference>
<dbReference type="RNAct" id="P59990">
    <property type="molecule type" value="protein"/>
</dbReference>
<dbReference type="Bgee" id="ENSG00000187175">
    <property type="expression patterns" value="Expressed in skin of abdomen and 19 other cell types or tissues"/>
</dbReference>
<dbReference type="GO" id="GO:0005829">
    <property type="term" value="C:cytosol"/>
    <property type="evidence" value="ECO:0000304"/>
    <property type="project" value="Reactome"/>
</dbReference>
<dbReference type="GO" id="GO:0045095">
    <property type="term" value="C:keratin filament"/>
    <property type="evidence" value="ECO:0007669"/>
    <property type="project" value="InterPro"/>
</dbReference>
<dbReference type="InterPro" id="IPR002494">
    <property type="entry name" value="KAP"/>
</dbReference>
<dbReference type="Pfam" id="PF13885">
    <property type="entry name" value="Keratin_B2_2"/>
    <property type="match status" value="1"/>
</dbReference>
<sequence>MCHTSCSSGCQPACCAPSPCQASCYIPVGCQSSVCVPVSFKPAVCVPVRCQSSVCVPVSCRPVVYAAPSCQSSGCCQPSCTSVLCRPISCSTPSCC</sequence>
<proteinExistence type="evidence at protein level"/>
<comment type="function">
    <text>In the hair cortex, hair keratin intermediate filaments are embedded in an interfilamentous matrix, consisting of hair keratin-associated proteins (KRTAP), which are essential for the formation of a rigid and resistant hair shaft through their extensive disulfide bond cross-linking with abundant cysteine residues of hair keratins. The matrix proteins include the high-sulfur and high-glycine-tyrosine keratins.</text>
</comment>
<comment type="subunit">
    <text>Interacts with hair keratins.</text>
</comment>
<comment type="interaction">
    <interactant intactId="EBI-10210845">
        <id>P59990</id>
    </interactant>
    <interactant intactId="EBI-744545">
        <id>Q8NEC5</id>
        <label>CATSPER1</label>
    </interactant>
    <organismsDiffer>false</organismsDiffer>
    <experiments>3</experiments>
</comment>
<comment type="interaction">
    <interactant intactId="EBI-10210845">
        <id>P59990</id>
    </interactant>
    <interactant intactId="EBI-947551">
        <id>Q9H2X0</id>
        <label>CHRD</label>
    </interactant>
    <organismsDiffer>false</organismsDiffer>
    <experiments>3</experiments>
</comment>
<comment type="interaction">
    <interactant intactId="EBI-10210845">
        <id>P59990</id>
    </interactant>
    <interactant intactId="EBI-3867333">
        <id>A8MQ03</id>
        <label>CYSRT1</label>
    </interactant>
    <organismsDiffer>false</organismsDiffer>
    <experiments>3</experiments>
</comment>
<comment type="interaction">
    <interactant intactId="EBI-10210845">
        <id>P59990</id>
    </interactant>
    <interactant intactId="EBI-746300">
        <id>Q96LJ7</id>
        <label>DHRS1</label>
    </interactant>
    <organismsDiffer>false</organismsDiffer>
    <experiments>3</experiments>
</comment>
<comment type="interaction">
    <interactant intactId="EBI-10210845">
        <id>P59990</id>
    </interactant>
    <interactant intactId="EBI-744099">
        <id>Q9H0I2</id>
        <label>ENKD1</label>
    </interactant>
    <organismsDiffer>false</organismsDiffer>
    <experiments>3</experiments>
</comment>
<comment type="interaction">
    <interactant intactId="EBI-10210845">
        <id>P59990</id>
    </interactant>
    <interactant intactId="EBI-741101">
        <id>Q13643</id>
        <label>FHL3</label>
    </interactant>
    <organismsDiffer>false</organismsDiffer>
    <experiments>6</experiments>
</comment>
<comment type="interaction">
    <interactant intactId="EBI-10210845">
        <id>P59990</id>
    </interactant>
    <interactant intactId="EBI-6672518">
        <id>P23771-2</id>
        <label>GATA3</label>
    </interactant>
    <organismsDiffer>false</organismsDiffer>
    <experiments>3</experiments>
</comment>
<comment type="interaction">
    <interactant intactId="EBI-10210845">
        <id>P59990</id>
    </interactant>
    <interactant intactId="EBI-747754">
        <id>P28799</id>
        <label>GRN</label>
    </interactant>
    <organismsDiffer>false</organismsDiffer>
    <experiments>3</experiments>
</comment>
<comment type="interaction">
    <interactant intactId="EBI-10210845">
        <id>P59990</id>
    </interactant>
    <interactant intactId="EBI-740785">
        <id>P49639</id>
        <label>HOXA1</label>
    </interactant>
    <organismsDiffer>false</organismsDiffer>
    <experiments>13</experiments>
</comment>
<comment type="interaction">
    <interactant intactId="EBI-10210845">
        <id>P59990</id>
    </interactant>
    <interactant intactId="EBI-1752118">
        <id>P31273</id>
        <label>HOXC8</label>
    </interactant>
    <organismsDiffer>false</organismsDiffer>
    <experiments>3</experiments>
</comment>
<comment type="interaction">
    <interactant intactId="EBI-10210845">
        <id>P59990</id>
    </interactant>
    <interactant intactId="EBI-11959885">
        <id>Q07627</id>
        <label>KRTAP1-1</label>
    </interactant>
    <organismsDiffer>false</organismsDiffer>
    <experiments>3</experiments>
</comment>
<comment type="interaction">
    <interactant intactId="EBI-10210845">
        <id>P59990</id>
    </interactant>
    <interactant intactId="EBI-11749135">
        <id>Q8IUG1</id>
        <label>KRTAP1-3</label>
    </interactant>
    <organismsDiffer>false</organismsDiffer>
    <experiments>3</experiments>
</comment>
<comment type="interaction">
    <interactant intactId="EBI-10210845">
        <id>P59990</id>
    </interactant>
    <interactant intactId="EBI-10172150">
        <id>P60370</id>
        <label>KRTAP10-5</label>
    </interactant>
    <organismsDiffer>false</organismsDiffer>
    <experiments>3</experiments>
</comment>
<comment type="interaction">
    <interactant intactId="EBI-10210845">
        <id>P59990</id>
    </interactant>
    <interactant intactId="EBI-10172290">
        <id>P60409</id>
        <label>KRTAP10-7</label>
    </interactant>
    <organismsDiffer>false</organismsDiffer>
    <experiments>6</experiments>
</comment>
<comment type="interaction">
    <interactant intactId="EBI-10210845">
        <id>P59990</id>
    </interactant>
    <interactant intactId="EBI-10171774">
        <id>P60410</id>
        <label>KRTAP10-8</label>
    </interactant>
    <organismsDiffer>false</organismsDiffer>
    <experiments>6</experiments>
</comment>
<comment type="interaction">
    <interactant intactId="EBI-10210845">
        <id>P59990</id>
    </interactant>
    <interactant intactId="EBI-10172052">
        <id>P60411</id>
        <label>KRTAP10-9</label>
    </interactant>
    <organismsDiffer>false</organismsDiffer>
    <experiments>6</experiments>
</comment>
<comment type="interaction">
    <interactant intactId="EBI-10210845">
        <id>P59990</id>
    </interactant>
    <interactant intactId="EBI-1052037">
        <id>Q8IUC1</id>
        <label>KRTAP11-1</label>
    </interactant>
    <organismsDiffer>false</organismsDiffer>
    <experiments>3</experiments>
</comment>
<comment type="interaction">
    <interactant intactId="EBI-10210845">
        <id>P59990</id>
    </interactant>
    <interactant intactId="EBI-10176379">
        <id>P59991</id>
        <label>KRTAP12-2</label>
    </interactant>
    <organismsDiffer>false</organismsDiffer>
    <experiments>4</experiments>
</comment>
<comment type="interaction">
    <interactant intactId="EBI-10210845">
        <id>P59990</id>
    </interactant>
    <interactant intactId="EBI-11953334">
        <id>P60328</id>
        <label>KRTAP12-3</label>
    </interactant>
    <organismsDiffer>false</organismsDiffer>
    <experiments>6</experiments>
</comment>
<comment type="interaction">
    <interactant intactId="EBI-10210845">
        <id>P59990</id>
    </interactant>
    <interactant intactId="EBI-11992140">
        <id>Q3LI76</id>
        <label>KRTAP15-1</label>
    </interactant>
    <organismsDiffer>false</organismsDiffer>
    <experiments>3</experiments>
</comment>
<comment type="interaction">
    <interactant intactId="EBI-10210845">
        <id>P59990</id>
    </interactant>
    <interactant intactId="EBI-3957672">
        <id>Q6PEX3</id>
        <label>KRTAP26-1</label>
    </interactant>
    <organismsDiffer>false</organismsDiffer>
    <experiments>3</experiments>
</comment>
<comment type="interaction">
    <interactant intactId="EBI-10210845">
        <id>P59990</id>
    </interactant>
    <interactant intactId="EBI-751260">
        <id>Q9BYR7</id>
        <label>KRTAP3-2</label>
    </interactant>
    <organismsDiffer>false</organismsDiffer>
    <experiments>3</experiments>
</comment>
<comment type="interaction">
    <interactant intactId="EBI-10210845">
        <id>P59990</id>
    </interactant>
    <interactant intactId="EBI-11958132">
        <id>Q9BYR3</id>
        <label>KRTAP4-4</label>
    </interactant>
    <organismsDiffer>false</organismsDiffer>
    <experiments>3</experiments>
</comment>
<comment type="interaction">
    <interactant intactId="EBI-10210845">
        <id>P59990</id>
    </interactant>
    <interactant intactId="EBI-11993254">
        <id>Q9BYR2</id>
        <label>KRTAP4-5</label>
    </interactant>
    <organismsDiffer>false</organismsDiffer>
    <experiments>3</experiments>
</comment>
<comment type="interaction">
    <interactant intactId="EBI-10210845">
        <id>P59990</id>
    </interactant>
    <interactant intactId="EBI-10250562">
        <id>Q6L8G9</id>
        <label>KRTAP5-6</label>
    </interactant>
    <organismsDiffer>false</organismsDiffer>
    <experiments>3</experiments>
</comment>
<comment type="interaction">
    <interactant intactId="EBI-10210845">
        <id>P59990</id>
    </interactant>
    <interactant intactId="EBI-3958099">
        <id>P26371</id>
        <label>KRTAP5-9</label>
    </interactant>
    <organismsDiffer>false</organismsDiffer>
    <experiments>6</experiments>
</comment>
<comment type="interaction">
    <interactant intactId="EBI-10210845">
        <id>P59990</id>
    </interactant>
    <interactant intactId="EBI-12111050">
        <id>Q3LI64</id>
        <label>KRTAP6-1</label>
    </interactant>
    <organismsDiffer>false</organismsDiffer>
    <experiments>3</experiments>
</comment>
<comment type="interaction">
    <interactant intactId="EBI-10210845">
        <id>P59990</id>
    </interactant>
    <interactant intactId="EBI-11962084">
        <id>Q3LI66</id>
        <label>KRTAP6-2</label>
    </interactant>
    <organismsDiffer>false</organismsDiffer>
    <experiments>3</experiments>
</comment>
<comment type="interaction">
    <interactant intactId="EBI-10210845">
        <id>P59990</id>
    </interactant>
    <interactant intactId="EBI-1044640">
        <id>Q9BYQ4</id>
        <label>KRTAP9-2</label>
    </interactant>
    <organismsDiffer>false</organismsDiffer>
    <experiments>3</experiments>
</comment>
<comment type="interaction">
    <interactant intactId="EBI-10210845">
        <id>P59990</id>
    </interactant>
    <interactant intactId="EBI-1043191">
        <id>Q9BYQ3</id>
        <label>KRTAP9-3</label>
    </interactant>
    <organismsDiffer>false</organismsDiffer>
    <experiments>3</experiments>
</comment>
<comment type="interaction">
    <interactant intactId="EBI-10210845">
        <id>P59990</id>
    </interactant>
    <interactant intactId="EBI-11962058">
        <id>Q5T7P2</id>
        <label>LCE1A</label>
    </interactant>
    <organismsDiffer>false</organismsDiffer>
    <experiments>3</experiments>
</comment>
<comment type="interaction">
    <interactant intactId="EBI-10210845">
        <id>P59990</id>
    </interactant>
    <interactant intactId="EBI-10245913">
        <id>Q5T7P3</id>
        <label>LCE1B</label>
    </interactant>
    <organismsDiffer>false</organismsDiffer>
    <experiments>3</experiments>
</comment>
<comment type="interaction">
    <interactant intactId="EBI-10210845">
        <id>P59990</id>
    </interactant>
    <interactant intactId="EBI-12224199">
        <id>Q5T751</id>
        <label>LCE1C</label>
    </interactant>
    <organismsDiffer>false</organismsDiffer>
    <experiments>3</experiments>
</comment>
<comment type="interaction">
    <interactant intactId="EBI-10210845">
        <id>P59990</id>
    </interactant>
    <interactant intactId="EBI-11955335">
        <id>Q5T753</id>
        <label>LCE1E</label>
    </interactant>
    <organismsDiffer>false</organismsDiffer>
    <experiments>3</experiments>
</comment>
<comment type="interaction">
    <interactant intactId="EBI-10210845">
        <id>P59990</id>
    </interactant>
    <interactant intactId="EBI-11958008">
        <id>Q5T754</id>
        <label>LCE1F</label>
    </interactant>
    <organismsDiffer>false</organismsDiffer>
    <experiments>3</experiments>
</comment>
<comment type="interaction">
    <interactant intactId="EBI-10210845">
        <id>P59990</id>
    </interactant>
    <interactant intactId="EBI-10246607">
        <id>Q5TA79</id>
        <label>LCE2A</label>
    </interactant>
    <organismsDiffer>false</organismsDiffer>
    <experiments>3</experiments>
</comment>
<comment type="interaction">
    <interactant intactId="EBI-10210845">
        <id>P59990</id>
    </interactant>
    <interactant intactId="EBI-11478468">
        <id>O14633</id>
        <label>LCE2B</label>
    </interactant>
    <organismsDiffer>false</organismsDiffer>
    <experiments>3</experiments>
</comment>
<comment type="interaction">
    <interactant intactId="EBI-10210845">
        <id>P59990</id>
    </interactant>
    <interactant intactId="EBI-11973993">
        <id>Q5TA81</id>
        <label>LCE2C</label>
    </interactant>
    <organismsDiffer>false</organismsDiffer>
    <experiments>3</experiments>
</comment>
<comment type="interaction">
    <interactant intactId="EBI-10210845">
        <id>P59990</id>
    </interactant>
    <interactant intactId="EBI-748397">
        <id>P50222</id>
        <label>MEOX2</label>
    </interactant>
    <organismsDiffer>false</organismsDiffer>
    <experiments>4</experiments>
</comment>
<comment type="interaction">
    <interactant intactId="EBI-10210845">
        <id>P59990</id>
    </interactant>
    <interactant intactId="EBI-16439278">
        <id>Q6FHY5</id>
        <label>MEOX2</label>
    </interactant>
    <organismsDiffer>false</organismsDiffer>
    <experiments>3</experiments>
</comment>
<comment type="interaction">
    <interactant intactId="EBI-10210845">
        <id>P59990</id>
    </interactant>
    <interactant intactId="EBI-10277551">
        <id>Q8WWR8-2</id>
        <label>NEU4</label>
    </interactant>
    <organismsDiffer>false</organismsDiffer>
    <experiments>3</experiments>
</comment>
<comment type="interaction">
    <interactant intactId="EBI-10210845">
        <id>P59990</id>
    </interactant>
    <interactant intactId="EBI-22310682">
        <id>P0DPK4</id>
        <label>NOTCH2NLC</label>
    </interactant>
    <organismsDiffer>false</organismsDiffer>
    <experiments>3</experiments>
</comment>
<comment type="interaction">
    <interactant intactId="EBI-10210845">
        <id>P59990</id>
    </interactant>
    <interactant intactId="EBI-740446">
        <id>P32242</id>
        <label>OTX1</label>
    </interactant>
    <organismsDiffer>false</organismsDiffer>
    <experiments>3</experiments>
</comment>
<comment type="interaction">
    <interactant intactId="EBI-10210845">
        <id>P59990</id>
    </interactant>
    <interactant intactId="EBI-1752525">
        <id>Q13087</id>
        <label>PDIA2</label>
    </interactant>
    <organismsDiffer>false</organismsDiffer>
    <experiments>3</experiments>
</comment>
<comment type="interaction">
    <interactant intactId="EBI-10210845">
        <id>P59990</id>
    </interactant>
    <interactant intactId="EBI-1054653">
        <id>P13667</id>
        <label>PDIA4</label>
    </interactant>
    <organismsDiffer>false</organismsDiffer>
    <experiments>3</experiments>
</comment>
<comment type="interaction">
    <interactant intactId="EBI-10210845">
        <id>P59990</id>
    </interactant>
    <interactant intactId="EBI-724639">
        <id>Q9UBV8</id>
        <label>PEF1</label>
    </interactant>
    <organismsDiffer>false</organismsDiffer>
    <experiments>3</experiments>
</comment>
<comment type="interaction">
    <interactant intactId="EBI-10210845">
        <id>P59990</id>
    </interactant>
    <interactant intactId="EBI-943588">
        <id>Q16633</id>
        <label>POU2AF1</label>
    </interactant>
    <organismsDiffer>false</organismsDiffer>
    <experiments>3</experiments>
</comment>
<comment type="interaction">
    <interactant intactId="EBI-10210845">
        <id>P59990</id>
    </interactant>
    <interactant intactId="EBI-17236143">
        <id>Q12837</id>
        <label>POU4F2</label>
    </interactant>
    <organismsDiffer>false</organismsDiffer>
    <experiments>3</experiments>
</comment>
<comment type="interaction">
    <interactant intactId="EBI-10210845">
        <id>P59990</id>
    </interactant>
    <interactant intactId="EBI-11986293">
        <id>P0CG20</id>
        <label>PRR35</label>
    </interactant>
    <organismsDiffer>false</organismsDiffer>
    <experiments>3</experiments>
</comment>
<comment type="interaction">
    <interactant intactId="EBI-10210845">
        <id>P59990</id>
    </interactant>
    <interactant intactId="EBI-740343">
        <id>Q93062-3</id>
        <label>RBPMS</label>
    </interactant>
    <organismsDiffer>false</organismsDiffer>
    <experiments>3</experiments>
</comment>
<comment type="interaction">
    <interactant intactId="EBI-10210845">
        <id>P59990</id>
    </interactant>
    <interactant intactId="EBI-750494">
        <id>P49901</id>
        <label>SMCP</label>
    </interactant>
    <organismsDiffer>false</organismsDiffer>
    <experiments>3</experiments>
</comment>
<comment type="interaction">
    <interactant intactId="EBI-10210845">
        <id>P59990</id>
    </interactant>
    <interactant intactId="EBI-9088321">
        <id>O94900</id>
        <label>TOX</label>
    </interactant>
    <organismsDiffer>false</organismsDiffer>
    <experiments>3</experiments>
</comment>
<comment type="interaction">
    <interactant intactId="EBI-10210845">
        <id>P59990</id>
    </interactant>
    <interactant intactId="EBI-358993">
        <id>Q15645</id>
        <label>TRIP13</label>
    </interactant>
    <organismsDiffer>false</organismsDiffer>
    <experiments>6</experiments>
</comment>
<comment type="interaction">
    <interactant intactId="EBI-10210845">
        <id>P59990</id>
    </interactant>
    <interactant intactId="EBI-947187">
        <id>Q9UHD9</id>
        <label>UBQLN2</label>
    </interactant>
    <organismsDiffer>false</organismsDiffer>
    <experiments>3</experiments>
</comment>
<comment type="interaction">
    <interactant intactId="EBI-10210845">
        <id>P59990</id>
    </interactant>
    <interactant intactId="EBI-11957216">
        <id>A8MV65-2</id>
        <label>VGLL3</label>
    </interactant>
    <organismsDiffer>false</organismsDiffer>
    <experiments>3</experiments>
</comment>
<comment type="interaction">
    <interactant intactId="EBI-10210845">
        <id>P59990</id>
    </interactant>
    <interactant intactId="EBI-11963196">
        <id>Q15915</id>
        <label>ZIC1</label>
    </interactant>
    <organismsDiffer>false</organismsDiffer>
    <experiments>3</experiments>
</comment>
<comment type="tissue specificity">
    <text evidence="1 2">Restricted to a narrow region of the hair fiber cuticle, lying approximately 20 cell layers above the apex of the dermal papilla of the hair root; not detected in any other tissues.</text>
</comment>
<comment type="similarity">
    <text evidence="3">Belongs to the KRTAP type 12 family.</text>
</comment>
<gene>
    <name type="primary">KRTAP12-1</name>
    <name type="synonym">KAP12.1</name>
    <name type="synonym">KRTAP12.1</name>
</gene>
<organism>
    <name type="scientific">Homo sapiens</name>
    <name type="common">Human</name>
    <dbReference type="NCBI Taxonomy" id="9606"/>
    <lineage>
        <taxon>Eukaryota</taxon>
        <taxon>Metazoa</taxon>
        <taxon>Chordata</taxon>
        <taxon>Craniata</taxon>
        <taxon>Vertebrata</taxon>
        <taxon>Euteleostomi</taxon>
        <taxon>Mammalia</taxon>
        <taxon>Eutheria</taxon>
        <taxon>Euarchontoglires</taxon>
        <taxon>Primates</taxon>
        <taxon>Haplorrhini</taxon>
        <taxon>Catarrhini</taxon>
        <taxon>Hominidae</taxon>
        <taxon>Homo</taxon>
    </lineage>
</organism>
<reference key="1">
    <citation type="journal article" date="2004" name="Genomics">
        <title>A cluster of 21 keratin-associated protein genes within introns of another gene on human chromosome 21q22.3.</title>
        <authorList>
            <person name="Shibuya K."/>
            <person name="Obayashi I."/>
            <person name="Asakawa S."/>
            <person name="Minoshima S."/>
            <person name="Kudoh J."/>
            <person name="Shimizu N."/>
        </authorList>
    </citation>
    <scope>NUCLEOTIDE SEQUENCE [MRNA]</scope>
    <scope>TISSUE SPECIFICITY</scope>
    <source>
        <tissue>Hair root</tissue>
    </source>
</reference>
<reference key="2">
    <citation type="journal article" date="2004" name="J. Invest. Dermatol.">
        <title>Hair keratin associated proteins: characterization of a second high sulfur KAP gene domain on human chromosome 21.</title>
        <authorList>
            <person name="Rogers M.A."/>
            <person name="Langbein L."/>
            <person name="Winter H."/>
            <person name="Beckmann I."/>
            <person name="Praetzel S."/>
            <person name="Schweizer J."/>
        </authorList>
    </citation>
    <scope>NUCLEOTIDE SEQUENCE [MRNA]</scope>
    <scope>TISSUE SPECIFICITY</scope>
    <source>
        <tissue>Scalp</tissue>
    </source>
</reference>
<reference key="3">
    <citation type="journal article" date="2000" name="Nature">
        <title>The DNA sequence of human chromosome 21.</title>
        <authorList>
            <person name="Hattori M."/>
            <person name="Fujiyama A."/>
            <person name="Taylor T.D."/>
            <person name="Watanabe H."/>
            <person name="Yada T."/>
            <person name="Park H.-S."/>
            <person name="Toyoda A."/>
            <person name="Ishii K."/>
            <person name="Totoki Y."/>
            <person name="Choi D.-K."/>
            <person name="Groner Y."/>
            <person name="Soeda E."/>
            <person name="Ohki M."/>
            <person name="Takagi T."/>
            <person name="Sakaki Y."/>
            <person name="Taudien S."/>
            <person name="Blechschmidt K."/>
            <person name="Polley A."/>
            <person name="Menzel U."/>
            <person name="Delabar J."/>
            <person name="Kumpf K."/>
            <person name="Lehmann R."/>
            <person name="Patterson D."/>
            <person name="Reichwald K."/>
            <person name="Rump A."/>
            <person name="Schillhabel M."/>
            <person name="Schudy A."/>
            <person name="Zimmermann W."/>
            <person name="Rosenthal A."/>
            <person name="Kudoh J."/>
            <person name="Shibuya K."/>
            <person name="Kawasaki K."/>
            <person name="Asakawa S."/>
            <person name="Shintani A."/>
            <person name="Sasaki T."/>
            <person name="Nagamine K."/>
            <person name="Mitsuyama S."/>
            <person name="Antonarakis S.E."/>
            <person name="Minoshima S."/>
            <person name="Shimizu N."/>
            <person name="Nordsiek G."/>
            <person name="Hornischer K."/>
            <person name="Brandt P."/>
            <person name="Scharfe M."/>
            <person name="Schoen O."/>
            <person name="Desario A."/>
            <person name="Reichelt J."/>
            <person name="Kauer G."/>
            <person name="Bloecker H."/>
            <person name="Ramser J."/>
            <person name="Beck A."/>
            <person name="Klages S."/>
            <person name="Hennig S."/>
            <person name="Riesselmann L."/>
            <person name="Dagand E."/>
            <person name="Wehrmeyer S."/>
            <person name="Borzym K."/>
            <person name="Gardiner K."/>
            <person name="Nizetic D."/>
            <person name="Francis F."/>
            <person name="Lehrach H."/>
            <person name="Reinhardt R."/>
            <person name="Yaspo M.-L."/>
        </authorList>
    </citation>
    <scope>NUCLEOTIDE SEQUENCE [LARGE SCALE GENOMIC DNA]</scope>
</reference>
<reference key="4">
    <citation type="journal article" date="2004" name="Genome Res.">
        <title>The status, quality, and expansion of the NIH full-length cDNA project: the Mammalian Gene Collection (MGC).</title>
        <authorList>
            <consortium name="The MGC Project Team"/>
        </authorList>
    </citation>
    <scope>NUCLEOTIDE SEQUENCE [LARGE SCALE MRNA]</scope>
</reference>
<accession>P59990</accession>
<accession>Q0VAS3</accession>